<protein>
    <recommendedName>
        <fullName evidence="1">Aspartate--tRNA(Asp/Asn) ligase</fullName>
        <ecNumber evidence="1">6.1.1.23</ecNumber>
    </recommendedName>
    <alternativeName>
        <fullName evidence="1">Aspartyl-tRNA synthetase</fullName>
        <shortName evidence="1">AspRS</shortName>
    </alternativeName>
    <alternativeName>
        <fullName evidence="1">Non-discriminating aspartyl-tRNA synthetase</fullName>
        <shortName evidence="1">ND-AspRS</shortName>
    </alternativeName>
</protein>
<comment type="function">
    <text evidence="1">Aspartyl-tRNA synthetase with relaxed tRNA specificity since it is able to aspartylate not only its cognate tRNA(Asp) but also tRNA(Asn). Reaction proceeds in two steps: L-aspartate is first activated by ATP to form Asp-AMP and then transferred to the acceptor end of tRNA(Asp/Asn).</text>
</comment>
<comment type="catalytic activity">
    <reaction evidence="1">
        <text>tRNA(Asx) + L-aspartate + ATP = L-aspartyl-tRNA(Asx) + AMP + diphosphate</text>
        <dbReference type="Rhea" id="RHEA:18349"/>
        <dbReference type="Rhea" id="RHEA-COMP:9710"/>
        <dbReference type="Rhea" id="RHEA-COMP:9711"/>
        <dbReference type="ChEBI" id="CHEBI:29991"/>
        <dbReference type="ChEBI" id="CHEBI:30616"/>
        <dbReference type="ChEBI" id="CHEBI:33019"/>
        <dbReference type="ChEBI" id="CHEBI:78442"/>
        <dbReference type="ChEBI" id="CHEBI:78516"/>
        <dbReference type="ChEBI" id="CHEBI:456215"/>
        <dbReference type="EC" id="6.1.1.23"/>
    </reaction>
</comment>
<comment type="subunit">
    <text evidence="1">Homodimer.</text>
</comment>
<comment type="subcellular location">
    <subcellularLocation>
        <location evidence="1">Cytoplasm</location>
    </subcellularLocation>
</comment>
<comment type="similarity">
    <text evidence="1">Belongs to the class-II aminoacyl-tRNA synthetase family. Type 1 subfamily.</text>
</comment>
<dbReference type="EC" id="6.1.1.23" evidence="1"/>
<dbReference type="EMBL" id="CP000232">
    <property type="protein sequence ID" value="ABC19978.1"/>
    <property type="molecule type" value="Genomic_DNA"/>
</dbReference>
<dbReference type="RefSeq" id="YP_430521.1">
    <property type="nucleotide sequence ID" value="NC_007644.1"/>
</dbReference>
<dbReference type="SMR" id="Q2RHW1"/>
<dbReference type="STRING" id="264732.Moth_1676"/>
<dbReference type="EnsemblBacteria" id="ABC19978">
    <property type="protein sequence ID" value="ABC19978"/>
    <property type="gene ID" value="Moth_1676"/>
</dbReference>
<dbReference type="KEGG" id="mta:Moth_1676"/>
<dbReference type="PATRIC" id="fig|264732.11.peg.1816"/>
<dbReference type="eggNOG" id="COG0173">
    <property type="taxonomic scope" value="Bacteria"/>
</dbReference>
<dbReference type="HOGENOM" id="CLU_014330_3_2_9"/>
<dbReference type="OrthoDB" id="9802326at2"/>
<dbReference type="GO" id="GO:0005737">
    <property type="term" value="C:cytoplasm"/>
    <property type="evidence" value="ECO:0007669"/>
    <property type="project" value="UniProtKB-SubCell"/>
</dbReference>
<dbReference type="GO" id="GO:0004815">
    <property type="term" value="F:aspartate-tRNA ligase activity"/>
    <property type="evidence" value="ECO:0007669"/>
    <property type="project" value="UniProtKB-UniRule"/>
</dbReference>
<dbReference type="GO" id="GO:0050560">
    <property type="term" value="F:aspartate-tRNA(Asn) ligase activity"/>
    <property type="evidence" value="ECO:0007669"/>
    <property type="project" value="UniProtKB-EC"/>
</dbReference>
<dbReference type="GO" id="GO:0005524">
    <property type="term" value="F:ATP binding"/>
    <property type="evidence" value="ECO:0007669"/>
    <property type="project" value="UniProtKB-UniRule"/>
</dbReference>
<dbReference type="GO" id="GO:0140096">
    <property type="term" value="F:catalytic activity, acting on a protein"/>
    <property type="evidence" value="ECO:0007669"/>
    <property type="project" value="UniProtKB-ARBA"/>
</dbReference>
<dbReference type="GO" id="GO:0003676">
    <property type="term" value="F:nucleic acid binding"/>
    <property type="evidence" value="ECO:0007669"/>
    <property type="project" value="InterPro"/>
</dbReference>
<dbReference type="GO" id="GO:0016740">
    <property type="term" value="F:transferase activity"/>
    <property type="evidence" value="ECO:0007669"/>
    <property type="project" value="UniProtKB-ARBA"/>
</dbReference>
<dbReference type="GO" id="GO:0006422">
    <property type="term" value="P:aspartyl-tRNA aminoacylation"/>
    <property type="evidence" value="ECO:0007669"/>
    <property type="project" value="UniProtKB-UniRule"/>
</dbReference>
<dbReference type="CDD" id="cd00777">
    <property type="entry name" value="AspRS_core"/>
    <property type="match status" value="1"/>
</dbReference>
<dbReference type="CDD" id="cd04317">
    <property type="entry name" value="EcAspRS_like_N"/>
    <property type="match status" value="1"/>
</dbReference>
<dbReference type="Gene3D" id="3.30.930.10">
    <property type="entry name" value="Bira Bifunctional Protein, Domain 2"/>
    <property type="match status" value="1"/>
</dbReference>
<dbReference type="Gene3D" id="3.30.1360.30">
    <property type="entry name" value="GAD-like domain"/>
    <property type="match status" value="1"/>
</dbReference>
<dbReference type="Gene3D" id="2.40.50.140">
    <property type="entry name" value="Nucleic acid-binding proteins"/>
    <property type="match status" value="1"/>
</dbReference>
<dbReference type="HAMAP" id="MF_00044">
    <property type="entry name" value="Asp_tRNA_synth_type1"/>
    <property type="match status" value="1"/>
</dbReference>
<dbReference type="InterPro" id="IPR004364">
    <property type="entry name" value="Aa-tRNA-synt_II"/>
</dbReference>
<dbReference type="InterPro" id="IPR006195">
    <property type="entry name" value="aa-tRNA-synth_II"/>
</dbReference>
<dbReference type="InterPro" id="IPR045864">
    <property type="entry name" value="aa-tRNA-synth_II/BPL/LPL"/>
</dbReference>
<dbReference type="InterPro" id="IPR004524">
    <property type="entry name" value="Asp-tRNA-ligase_1"/>
</dbReference>
<dbReference type="InterPro" id="IPR047089">
    <property type="entry name" value="Asp-tRNA-ligase_1_N"/>
</dbReference>
<dbReference type="InterPro" id="IPR002312">
    <property type="entry name" value="Asp/Asn-tRNA-synth_IIb"/>
</dbReference>
<dbReference type="InterPro" id="IPR047090">
    <property type="entry name" value="AspRS_core"/>
</dbReference>
<dbReference type="InterPro" id="IPR004115">
    <property type="entry name" value="GAD-like_sf"/>
</dbReference>
<dbReference type="InterPro" id="IPR029351">
    <property type="entry name" value="GAD_dom"/>
</dbReference>
<dbReference type="InterPro" id="IPR012340">
    <property type="entry name" value="NA-bd_OB-fold"/>
</dbReference>
<dbReference type="InterPro" id="IPR004365">
    <property type="entry name" value="NA-bd_OB_tRNA"/>
</dbReference>
<dbReference type="NCBIfam" id="TIGR00459">
    <property type="entry name" value="aspS_bact"/>
    <property type="match status" value="1"/>
</dbReference>
<dbReference type="NCBIfam" id="NF001750">
    <property type="entry name" value="PRK00476.1"/>
    <property type="match status" value="1"/>
</dbReference>
<dbReference type="PANTHER" id="PTHR22594:SF5">
    <property type="entry name" value="ASPARTATE--TRNA LIGASE, MITOCHONDRIAL"/>
    <property type="match status" value="1"/>
</dbReference>
<dbReference type="PANTHER" id="PTHR22594">
    <property type="entry name" value="ASPARTYL/LYSYL-TRNA SYNTHETASE"/>
    <property type="match status" value="1"/>
</dbReference>
<dbReference type="Pfam" id="PF02938">
    <property type="entry name" value="GAD"/>
    <property type="match status" value="1"/>
</dbReference>
<dbReference type="Pfam" id="PF00152">
    <property type="entry name" value="tRNA-synt_2"/>
    <property type="match status" value="1"/>
</dbReference>
<dbReference type="Pfam" id="PF01336">
    <property type="entry name" value="tRNA_anti-codon"/>
    <property type="match status" value="1"/>
</dbReference>
<dbReference type="PRINTS" id="PR01042">
    <property type="entry name" value="TRNASYNTHASP"/>
</dbReference>
<dbReference type="SUPFAM" id="SSF55681">
    <property type="entry name" value="Class II aaRS and biotin synthetases"/>
    <property type="match status" value="1"/>
</dbReference>
<dbReference type="SUPFAM" id="SSF55261">
    <property type="entry name" value="GAD domain-like"/>
    <property type="match status" value="1"/>
</dbReference>
<dbReference type="SUPFAM" id="SSF50249">
    <property type="entry name" value="Nucleic acid-binding proteins"/>
    <property type="match status" value="1"/>
</dbReference>
<dbReference type="PROSITE" id="PS50862">
    <property type="entry name" value="AA_TRNA_LIGASE_II"/>
    <property type="match status" value="1"/>
</dbReference>
<name>SYDND_MOOTA</name>
<keyword id="KW-0030">Aminoacyl-tRNA synthetase</keyword>
<keyword id="KW-0067">ATP-binding</keyword>
<keyword id="KW-0963">Cytoplasm</keyword>
<keyword id="KW-0436">Ligase</keyword>
<keyword id="KW-0547">Nucleotide-binding</keyword>
<keyword id="KW-0648">Protein biosynthesis</keyword>
<evidence type="ECO:0000255" key="1">
    <source>
        <dbReference type="HAMAP-Rule" id="MF_00044"/>
    </source>
</evidence>
<organism>
    <name type="scientific">Moorella thermoacetica (strain ATCC 39073 / JCM 9320)</name>
    <dbReference type="NCBI Taxonomy" id="264732"/>
    <lineage>
        <taxon>Bacteria</taxon>
        <taxon>Bacillati</taxon>
        <taxon>Bacillota</taxon>
        <taxon>Clostridia</taxon>
        <taxon>Moorellales</taxon>
        <taxon>Moorellaceae</taxon>
        <taxon>Moorella</taxon>
    </lineage>
</organism>
<gene>
    <name evidence="1" type="primary">aspS</name>
    <name type="ordered locus">Moth_1676</name>
</gene>
<reference key="1">
    <citation type="journal article" date="2008" name="Environ. Microbiol.">
        <title>The complete genome sequence of Moorella thermoacetica (f. Clostridium thermoaceticum).</title>
        <authorList>
            <person name="Pierce E."/>
            <person name="Xie G."/>
            <person name="Barabote R.D."/>
            <person name="Saunders E."/>
            <person name="Han C.S."/>
            <person name="Detter J.C."/>
            <person name="Richardson P."/>
            <person name="Brettin T.S."/>
            <person name="Das A."/>
            <person name="Ljungdahl L.G."/>
            <person name="Ragsdale S.W."/>
        </authorList>
    </citation>
    <scope>NUCLEOTIDE SEQUENCE [LARGE SCALE GENOMIC DNA]</scope>
    <source>
        <strain>ATCC 39073 / JCM 9320</strain>
    </source>
</reference>
<proteinExistence type="inferred from homology"/>
<sequence length="600" mass="67678">MVVVEGLAGLHRSHGCGELTAADAGKEVTLMGWVHRRRDHGGLIFIDLRDRSGLVQVVCDPKSGPAFQKAEEVRNEYVVAVRGLVRRRPEGTVNPKLPTGEIEVVAEEFRLLNRAKTPPFYIDDGIDVDEALRLRYRYLDLRRPEMQRLLYLRYRTTRAIRDFLDARGFWEIETPMLTRSTPEGARDFLVPSRLRPGEFFALPQSPQLFKQILMVAGVERYFQIVRCFRDEDLRADRQPEFTQLDMEMSFVQREDILKLVEELMAYVFRETLGVELALPLPRLTYREAMDRYGSDKPDIRFGMEIVDVSDLVAGCGFKVFAEAVARGGVVRGLCAPGCAGYSRRELDELTRQAAVFGAKGLAWMAVTPEGIRSPIAKFFTSGELEGLVARLAGKPGDLLLFVADTETTAATALGALRLEMGRRLHLYDPEQLAFTWVTEFPLLEYSAEEKRYVAVHHPFTMPMEEDWPLLDSDPLRVRALAYDLVLNGVELGGGSIRIHRRDIQEKMFNLLGFTPEAARDKFGFLLDAFEYGTPPHGGIAFGLDRMLMLMARRDTIRDCIPFPKTQSGTCLMTAAPSGVSPEQLQELHLRSTARKSTNPA</sequence>
<feature type="chain" id="PRO_0000235534" description="Aspartate--tRNA(Asp/Asn) ligase">
    <location>
        <begin position="1"/>
        <end position="600"/>
    </location>
</feature>
<feature type="region of interest" description="Aspartate" evidence="1">
    <location>
        <begin position="207"/>
        <end position="210"/>
    </location>
</feature>
<feature type="binding site" evidence="1">
    <location>
        <position position="183"/>
    </location>
    <ligand>
        <name>L-aspartate</name>
        <dbReference type="ChEBI" id="CHEBI:29991"/>
    </ligand>
</feature>
<feature type="binding site" evidence="1">
    <location>
        <begin position="229"/>
        <end position="231"/>
    </location>
    <ligand>
        <name>ATP</name>
        <dbReference type="ChEBI" id="CHEBI:30616"/>
    </ligand>
</feature>
<feature type="binding site" evidence="1">
    <location>
        <position position="229"/>
    </location>
    <ligand>
        <name>L-aspartate</name>
        <dbReference type="ChEBI" id="CHEBI:29991"/>
    </ligand>
</feature>
<feature type="binding site" evidence="1">
    <location>
        <position position="238"/>
    </location>
    <ligand>
        <name>ATP</name>
        <dbReference type="ChEBI" id="CHEBI:30616"/>
    </ligand>
</feature>
<feature type="binding site" evidence="1">
    <location>
        <position position="456"/>
    </location>
    <ligand>
        <name>L-aspartate</name>
        <dbReference type="ChEBI" id="CHEBI:29991"/>
    </ligand>
</feature>
<feature type="binding site" evidence="1">
    <location>
        <position position="490"/>
    </location>
    <ligand>
        <name>ATP</name>
        <dbReference type="ChEBI" id="CHEBI:30616"/>
    </ligand>
</feature>
<feature type="binding site" evidence="1">
    <location>
        <position position="497"/>
    </location>
    <ligand>
        <name>L-aspartate</name>
        <dbReference type="ChEBI" id="CHEBI:29991"/>
    </ligand>
</feature>
<feature type="binding site" evidence="1">
    <location>
        <begin position="542"/>
        <end position="545"/>
    </location>
    <ligand>
        <name>ATP</name>
        <dbReference type="ChEBI" id="CHEBI:30616"/>
    </ligand>
</feature>
<feature type="site" description="Important for tRNA non-discrimination" evidence="1">
    <location>
        <position position="40"/>
    </location>
</feature>
<feature type="site" description="Important for tRNA non-discrimination" evidence="1">
    <location>
        <position position="91"/>
    </location>
</feature>
<accession>Q2RHW1</accession>